<protein>
    <recommendedName>
        <fullName evidence="1">Argininosuccinate lyase</fullName>
        <shortName evidence="1">ASAL</shortName>
        <ecNumber evidence="1">4.3.2.1</ecNumber>
    </recommendedName>
    <alternativeName>
        <fullName evidence="1">Arginosuccinase</fullName>
    </alternativeName>
</protein>
<organism>
    <name type="scientific">Microcystis aeruginosa (strain NIES-843 / IAM M-2473)</name>
    <dbReference type="NCBI Taxonomy" id="449447"/>
    <lineage>
        <taxon>Bacteria</taxon>
        <taxon>Bacillati</taxon>
        <taxon>Cyanobacteriota</taxon>
        <taxon>Cyanophyceae</taxon>
        <taxon>Oscillatoriophycideae</taxon>
        <taxon>Chroococcales</taxon>
        <taxon>Microcystaceae</taxon>
        <taxon>Microcystis</taxon>
    </lineage>
</organism>
<reference key="1">
    <citation type="journal article" date="2007" name="DNA Res.">
        <title>Complete genomic structure of the bloom-forming toxic cyanobacterium Microcystis aeruginosa NIES-843.</title>
        <authorList>
            <person name="Kaneko T."/>
            <person name="Nakajima N."/>
            <person name="Okamoto S."/>
            <person name="Suzuki I."/>
            <person name="Tanabe Y."/>
            <person name="Tamaoki M."/>
            <person name="Nakamura Y."/>
            <person name="Kasai F."/>
            <person name="Watanabe A."/>
            <person name="Kawashima K."/>
            <person name="Kishida Y."/>
            <person name="Ono A."/>
            <person name="Shimizu Y."/>
            <person name="Takahashi C."/>
            <person name="Minami C."/>
            <person name="Fujishiro T."/>
            <person name="Kohara M."/>
            <person name="Katoh M."/>
            <person name="Nakazaki N."/>
            <person name="Nakayama S."/>
            <person name="Yamada M."/>
            <person name="Tabata S."/>
            <person name="Watanabe M.M."/>
        </authorList>
    </citation>
    <scope>NUCLEOTIDE SEQUENCE [LARGE SCALE GENOMIC DNA]</scope>
    <source>
        <strain>NIES-843 / IAM M-247</strain>
    </source>
</reference>
<accession>B0JXI2</accession>
<proteinExistence type="inferred from homology"/>
<comment type="catalytic activity">
    <reaction evidence="1">
        <text>2-(N(omega)-L-arginino)succinate = fumarate + L-arginine</text>
        <dbReference type="Rhea" id="RHEA:24020"/>
        <dbReference type="ChEBI" id="CHEBI:29806"/>
        <dbReference type="ChEBI" id="CHEBI:32682"/>
        <dbReference type="ChEBI" id="CHEBI:57472"/>
        <dbReference type="EC" id="4.3.2.1"/>
    </reaction>
</comment>
<comment type="pathway">
    <text evidence="1">Amino-acid biosynthesis; L-arginine biosynthesis; L-arginine from L-ornithine and carbamoyl phosphate: step 3/3.</text>
</comment>
<comment type="subcellular location">
    <subcellularLocation>
        <location evidence="1">Cytoplasm</location>
    </subcellularLocation>
</comment>
<comment type="similarity">
    <text evidence="1">Belongs to the lyase 1 family. Argininosuccinate lyase subfamily.</text>
</comment>
<keyword id="KW-0028">Amino-acid biosynthesis</keyword>
<keyword id="KW-0055">Arginine biosynthesis</keyword>
<keyword id="KW-0963">Cytoplasm</keyword>
<keyword id="KW-0456">Lyase</keyword>
<evidence type="ECO:0000255" key="1">
    <source>
        <dbReference type="HAMAP-Rule" id="MF_00006"/>
    </source>
</evidence>
<feature type="chain" id="PRO_1000073849" description="Argininosuccinate lyase">
    <location>
        <begin position="1"/>
        <end position="466"/>
    </location>
</feature>
<dbReference type="EC" id="4.3.2.1" evidence="1"/>
<dbReference type="EMBL" id="AP009552">
    <property type="protein sequence ID" value="BAG01809.1"/>
    <property type="molecule type" value="Genomic_DNA"/>
</dbReference>
<dbReference type="RefSeq" id="WP_012265243.1">
    <property type="nucleotide sequence ID" value="NC_010296.1"/>
</dbReference>
<dbReference type="SMR" id="B0JXI2"/>
<dbReference type="STRING" id="449447.MAE_19870"/>
<dbReference type="PaxDb" id="449447-MAE_19870"/>
<dbReference type="EnsemblBacteria" id="BAG01809">
    <property type="protein sequence ID" value="BAG01809"/>
    <property type="gene ID" value="MAE_19870"/>
</dbReference>
<dbReference type="KEGG" id="mar:MAE_19870"/>
<dbReference type="PATRIC" id="fig|449447.4.peg.1829"/>
<dbReference type="eggNOG" id="COG0165">
    <property type="taxonomic scope" value="Bacteria"/>
</dbReference>
<dbReference type="HOGENOM" id="CLU_027272_2_3_3"/>
<dbReference type="BioCyc" id="MAER449447:MAE_RS08695-MONOMER"/>
<dbReference type="UniPathway" id="UPA00068">
    <property type="reaction ID" value="UER00114"/>
</dbReference>
<dbReference type="Proteomes" id="UP000001510">
    <property type="component" value="Chromosome"/>
</dbReference>
<dbReference type="GO" id="GO:0005829">
    <property type="term" value="C:cytosol"/>
    <property type="evidence" value="ECO:0007669"/>
    <property type="project" value="TreeGrafter"/>
</dbReference>
<dbReference type="GO" id="GO:0004056">
    <property type="term" value="F:argininosuccinate lyase activity"/>
    <property type="evidence" value="ECO:0007669"/>
    <property type="project" value="UniProtKB-UniRule"/>
</dbReference>
<dbReference type="GO" id="GO:0042450">
    <property type="term" value="P:arginine biosynthetic process via ornithine"/>
    <property type="evidence" value="ECO:0007669"/>
    <property type="project" value="InterPro"/>
</dbReference>
<dbReference type="GO" id="GO:0006526">
    <property type="term" value="P:L-arginine biosynthetic process"/>
    <property type="evidence" value="ECO:0007669"/>
    <property type="project" value="UniProtKB-UniRule"/>
</dbReference>
<dbReference type="CDD" id="cd01359">
    <property type="entry name" value="Argininosuccinate_lyase"/>
    <property type="match status" value="1"/>
</dbReference>
<dbReference type="FunFam" id="1.10.275.10:FF:000002">
    <property type="entry name" value="Argininosuccinate lyase"/>
    <property type="match status" value="1"/>
</dbReference>
<dbReference type="FunFam" id="1.10.40.30:FF:000001">
    <property type="entry name" value="Argininosuccinate lyase"/>
    <property type="match status" value="1"/>
</dbReference>
<dbReference type="FunFam" id="1.20.200.10:FF:000015">
    <property type="entry name" value="argininosuccinate lyase isoform X2"/>
    <property type="match status" value="1"/>
</dbReference>
<dbReference type="Gene3D" id="1.10.40.30">
    <property type="entry name" value="Fumarase/aspartase (C-terminal domain)"/>
    <property type="match status" value="1"/>
</dbReference>
<dbReference type="Gene3D" id="1.20.200.10">
    <property type="entry name" value="Fumarase/aspartase (Central domain)"/>
    <property type="match status" value="1"/>
</dbReference>
<dbReference type="Gene3D" id="1.10.275.10">
    <property type="entry name" value="Fumarase/aspartase (N-terminal domain)"/>
    <property type="match status" value="1"/>
</dbReference>
<dbReference type="HAMAP" id="MF_00006">
    <property type="entry name" value="Arg_succ_lyase"/>
    <property type="match status" value="1"/>
</dbReference>
<dbReference type="InterPro" id="IPR029419">
    <property type="entry name" value="Arg_succ_lyase_C"/>
</dbReference>
<dbReference type="InterPro" id="IPR009049">
    <property type="entry name" value="Argininosuccinate_lyase"/>
</dbReference>
<dbReference type="InterPro" id="IPR024083">
    <property type="entry name" value="Fumarase/histidase_N"/>
</dbReference>
<dbReference type="InterPro" id="IPR020557">
    <property type="entry name" value="Fumarate_lyase_CS"/>
</dbReference>
<dbReference type="InterPro" id="IPR000362">
    <property type="entry name" value="Fumarate_lyase_fam"/>
</dbReference>
<dbReference type="InterPro" id="IPR022761">
    <property type="entry name" value="Fumarate_lyase_N"/>
</dbReference>
<dbReference type="InterPro" id="IPR008948">
    <property type="entry name" value="L-Aspartase-like"/>
</dbReference>
<dbReference type="NCBIfam" id="TIGR00838">
    <property type="entry name" value="argH"/>
    <property type="match status" value="1"/>
</dbReference>
<dbReference type="PANTHER" id="PTHR43814">
    <property type="entry name" value="ARGININOSUCCINATE LYASE"/>
    <property type="match status" value="1"/>
</dbReference>
<dbReference type="PANTHER" id="PTHR43814:SF1">
    <property type="entry name" value="ARGININOSUCCINATE LYASE"/>
    <property type="match status" value="1"/>
</dbReference>
<dbReference type="Pfam" id="PF14698">
    <property type="entry name" value="ASL_C2"/>
    <property type="match status" value="1"/>
</dbReference>
<dbReference type="Pfam" id="PF00206">
    <property type="entry name" value="Lyase_1"/>
    <property type="match status" value="1"/>
</dbReference>
<dbReference type="PRINTS" id="PR00145">
    <property type="entry name" value="ARGSUCLYASE"/>
</dbReference>
<dbReference type="PRINTS" id="PR00149">
    <property type="entry name" value="FUMRATELYASE"/>
</dbReference>
<dbReference type="SUPFAM" id="SSF48557">
    <property type="entry name" value="L-aspartase-like"/>
    <property type="match status" value="1"/>
</dbReference>
<dbReference type="PROSITE" id="PS00163">
    <property type="entry name" value="FUMARATE_LYASES"/>
    <property type="match status" value="1"/>
</dbReference>
<name>ARLY_MICAN</name>
<sequence length="466" mass="52122">MTAKKTWSDRFEGSLHPTIVEFNASIGFDIELIEYDLTGSIAHAKMLAYTGIISPEEADSLVSGLEQIRQEYRTGNFNPGIDQEDVHFAVERRLTEIVGDVGKKLHTARSRNDQVGTDIRLYLRQQIDDIRQEIRNFQQALVNHAENHLETLIPGYTHLQRAQPISLAHHLLAYFQMAERDHQRLGQIRARTNISPLGCGALAGTTFPIDRHYSANLLDFEQVYNNSLDGVSDRDFAIEFMTAASLIMVHLSRLSEEMILWASQEFSFITLTDSCATGSSIMPQKKNPDVPELVRGKTGRVFGHLQALLTLMKGLPLAYNKDLQEDKEALFDGVKTVRICLQAMTVLLATGIQFKTDRLANAVAEDFSNATDVADYLASKGIPFREAYNLVGKVVKSSLAAGKLLKDLTLTEWQELHPAFEADIYDAIAPRQVVAARNSYGGTGFEEVRSALIQAKAILDHRKFWV</sequence>
<gene>
    <name evidence="1" type="primary">argH</name>
    <name type="ordered locus">MAE_19870</name>
</gene>